<evidence type="ECO:0000305" key="1"/>
<protein>
    <recommendedName>
        <fullName evidence="1">Small ribosomal subunit protein uS3m</fullName>
    </recommendedName>
    <alternativeName>
        <fullName>Ribosomal protein S3, mitochondrial</fullName>
    </alternativeName>
</protein>
<reference key="1">
    <citation type="journal article" date="1995" name="J. Mol. Biol.">
        <title>Complete sequence of the mitochondrial DNA of the rhodophyte Chondrus crispus (Gigartinales). Gene content and genome organization.</title>
        <authorList>
            <person name="Leblanc C."/>
            <person name="Boyen C."/>
            <person name="Richard O."/>
            <person name="Bonnard G."/>
            <person name="Grienenberger J.-M."/>
            <person name="Kloareg B."/>
        </authorList>
    </citation>
    <scope>NUCLEOTIDE SEQUENCE [GENOMIC DNA]</scope>
    <source>
        <tissue>Apices</tissue>
    </source>
</reference>
<comment type="subcellular location">
    <subcellularLocation>
        <location>Mitochondrion</location>
    </subcellularLocation>
</comment>
<comment type="similarity">
    <text evidence="1">Belongs to the universal ribosomal protein uS3 family.</text>
</comment>
<sequence>MAQKINPISFRLGTTQVWNSTLQIYGKSFKNYFSIVNNQLNLQNFIIRYVKLNGFQINYYEWKMHKNKTFLSIYFSPSFNNGKLNLTNFKQLSNLLSNWCSNKFIFHFYLNSKWSLTSNFLTLYTKYLVEQKLGPKKIIVILCNFLQDQLNSSKVMHFKFGFIETKLVGFKIRLVGRFDSSNQMAKSFDQTIGTLSLTNLSSFVEYSNIEIHTKLGTCGVQVWLFFTPKKFINGYNQKNS</sequence>
<dbReference type="EMBL" id="Z47547">
    <property type="protein sequence ID" value="CAA87601.1"/>
    <property type="molecule type" value="Genomic_DNA"/>
</dbReference>
<dbReference type="PIR" id="S59085">
    <property type="entry name" value="S59085"/>
</dbReference>
<dbReference type="RefSeq" id="NP_062480.1">
    <property type="nucleotide sequence ID" value="NC_001677.2"/>
</dbReference>
<dbReference type="SMR" id="P48938"/>
<dbReference type="GeneID" id="809355"/>
<dbReference type="KEGG" id="ccp:ChcroMp01"/>
<dbReference type="GO" id="GO:0005739">
    <property type="term" value="C:mitochondrion"/>
    <property type="evidence" value="ECO:0007669"/>
    <property type="project" value="UniProtKB-SubCell"/>
</dbReference>
<dbReference type="GO" id="GO:1990904">
    <property type="term" value="C:ribonucleoprotein complex"/>
    <property type="evidence" value="ECO:0007669"/>
    <property type="project" value="UniProtKB-KW"/>
</dbReference>
<dbReference type="GO" id="GO:0005840">
    <property type="term" value="C:ribosome"/>
    <property type="evidence" value="ECO:0007669"/>
    <property type="project" value="UniProtKB-KW"/>
</dbReference>
<dbReference type="GO" id="GO:0003723">
    <property type="term" value="F:RNA binding"/>
    <property type="evidence" value="ECO:0007669"/>
    <property type="project" value="InterPro"/>
</dbReference>
<dbReference type="Gene3D" id="3.30.1140.32">
    <property type="entry name" value="Ribosomal protein S3, C-terminal domain"/>
    <property type="match status" value="1"/>
</dbReference>
<dbReference type="InterPro" id="IPR009019">
    <property type="entry name" value="KH_sf_prok-type"/>
</dbReference>
<dbReference type="InterPro" id="IPR036419">
    <property type="entry name" value="Ribosomal_S3_C_sf"/>
</dbReference>
<dbReference type="SUPFAM" id="SSF54814">
    <property type="entry name" value="Prokaryotic type KH domain (KH-domain type II)"/>
    <property type="match status" value="1"/>
</dbReference>
<dbReference type="SUPFAM" id="SSF54821">
    <property type="entry name" value="Ribosomal protein S3 C-terminal domain"/>
    <property type="match status" value="1"/>
</dbReference>
<organism>
    <name type="scientific">Chondrus crispus</name>
    <name type="common">Carrageen Irish moss</name>
    <name type="synonym">Polymorpha crispa</name>
    <dbReference type="NCBI Taxonomy" id="2769"/>
    <lineage>
        <taxon>Eukaryota</taxon>
        <taxon>Rhodophyta</taxon>
        <taxon>Florideophyceae</taxon>
        <taxon>Rhodymeniophycidae</taxon>
        <taxon>Gigartinales</taxon>
        <taxon>Gigartinaceae</taxon>
        <taxon>Chondrus</taxon>
    </lineage>
</organism>
<name>RT03_CHOCR</name>
<feature type="chain" id="PRO_0000130312" description="Small ribosomal subunit protein uS3m">
    <location>
        <begin position="1"/>
        <end position="240"/>
    </location>
</feature>
<keyword id="KW-0496">Mitochondrion</keyword>
<keyword id="KW-0687">Ribonucleoprotein</keyword>
<keyword id="KW-0689">Ribosomal protein</keyword>
<gene>
    <name type="primary">RPS3</name>
</gene>
<proteinExistence type="inferred from homology"/>
<accession>P48938</accession>
<geneLocation type="mitochondrion"/>